<accession>A0A1S3THR8</accession>
<accession>Q9ZWP8</accession>
<feature type="chain" id="PRO_0000446055" description="Phytohormone-binding protein CSBP">
    <location>
        <begin position="1"/>
        <end position="155"/>
    </location>
</feature>
<feature type="binding site" evidence="2 3 9 10">
    <location>
        <position position="22"/>
    </location>
    <ligand>
        <name>trans-zeatin</name>
        <dbReference type="ChEBI" id="CHEBI:16522"/>
        <label>1</label>
    </ligand>
</feature>
<feature type="binding site" evidence="4 11">
    <location>
        <position position="67"/>
    </location>
    <ligand>
        <name>gibberellin A3</name>
        <dbReference type="ChEBI" id="CHEBI:58590"/>
    </ligand>
</feature>
<feature type="binding site" evidence="2 3 9 10">
    <location>
        <position position="67"/>
    </location>
    <ligand>
        <name>trans-zeatin</name>
        <dbReference type="ChEBI" id="CHEBI:16522"/>
        <label>2</label>
    </ligand>
</feature>
<feature type="binding site" evidence="2 3 9 10">
    <location>
        <position position="69"/>
    </location>
    <ligand>
        <name>trans-zeatin</name>
        <dbReference type="ChEBI" id="CHEBI:16522"/>
        <label>1</label>
    </ligand>
</feature>
<feature type="binding site" evidence="2 3 9 10">
    <location>
        <begin position="139"/>
        <end position="142"/>
    </location>
    <ligand>
        <name>trans-zeatin</name>
        <dbReference type="ChEBI" id="CHEBI:16522"/>
        <label>1</label>
    </ligand>
</feature>
<feature type="binding site" evidence="4 11">
    <location>
        <position position="139"/>
    </location>
    <ligand>
        <name>gibberellin A3</name>
        <dbReference type="ChEBI" id="CHEBI:58590"/>
    </ligand>
</feature>
<feature type="sequence conflict" description="In Ref. 1; BAA74451." evidence="7" ref="1">
    <original>S</original>
    <variation>N</variation>
    <location>
        <position position="92"/>
    </location>
</feature>
<feature type="strand" evidence="12">
    <location>
        <begin position="3"/>
        <end position="13"/>
    </location>
</feature>
<feature type="helix" evidence="12">
    <location>
        <begin position="15"/>
        <end position="23"/>
    </location>
</feature>
<feature type="helix" evidence="12">
    <location>
        <begin position="29"/>
        <end position="33"/>
    </location>
</feature>
<feature type="turn" evidence="12">
    <location>
        <begin position="35"/>
        <end position="37"/>
    </location>
</feature>
<feature type="strand" evidence="12">
    <location>
        <begin position="38"/>
        <end position="45"/>
    </location>
</feature>
<feature type="strand" evidence="12">
    <location>
        <begin position="47"/>
        <end position="49"/>
    </location>
</feature>
<feature type="strand" evidence="12">
    <location>
        <begin position="53"/>
        <end position="58"/>
    </location>
</feature>
<feature type="strand" evidence="12">
    <location>
        <begin position="62"/>
        <end position="64"/>
    </location>
</feature>
<feature type="strand" evidence="12">
    <location>
        <begin position="66"/>
        <end position="75"/>
    </location>
</feature>
<feature type="turn" evidence="12">
    <location>
        <begin position="76"/>
        <end position="79"/>
    </location>
</feature>
<feature type="strand" evidence="12">
    <location>
        <begin position="80"/>
        <end position="88"/>
    </location>
</feature>
<feature type="helix" evidence="12">
    <location>
        <begin position="89"/>
        <end position="92"/>
    </location>
</feature>
<feature type="strand" evidence="12">
    <location>
        <begin position="96"/>
        <end position="108"/>
    </location>
</feature>
<feature type="strand" evidence="12">
    <location>
        <begin position="111"/>
        <end position="121"/>
    </location>
</feature>
<feature type="helix" evidence="13">
    <location>
        <begin position="128"/>
        <end position="130"/>
    </location>
</feature>
<feature type="helix" evidence="12">
    <location>
        <begin position="132"/>
        <end position="150"/>
    </location>
</feature>
<name>PHBP_VIGRR</name>
<evidence type="ECO:0000269" key="1">
    <source>
    </source>
</evidence>
<evidence type="ECO:0000269" key="2">
    <source>
    </source>
</evidence>
<evidence type="ECO:0000269" key="3">
    <source>
    </source>
</evidence>
<evidence type="ECO:0000269" key="4">
    <source>
    </source>
</evidence>
<evidence type="ECO:0000303" key="5">
    <source>
    </source>
</evidence>
<evidence type="ECO:0000303" key="6">
    <source>
    </source>
</evidence>
<evidence type="ECO:0000305" key="7"/>
<evidence type="ECO:0000305" key="8">
    <source>
    </source>
</evidence>
<evidence type="ECO:0007744" key="9">
    <source>
        <dbReference type="PDB" id="2FLH"/>
    </source>
</evidence>
<evidence type="ECO:0007744" key="10">
    <source>
        <dbReference type="PDB" id="3C0V"/>
    </source>
</evidence>
<evidence type="ECO:0007744" key="11">
    <source>
        <dbReference type="PDB" id="4PSB"/>
    </source>
</evidence>
<evidence type="ECO:0007829" key="12">
    <source>
        <dbReference type="PDB" id="2FLH"/>
    </source>
</evidence>
<evidence type="ECO:0007829" key="13">
    <source>
        <dbReference type="PDB" id="3C0V"/>
    </source>
</evidence>
<keyword id="KW-0002">3D-structure</keyword>
<keyword id="KW-0020">Allergen</keyword>
<keyword id="KW-0903">Direct protein sequencing</keyword>
<keyword id="KW-1185">Reference proteome</keyword>
<comment type="function">
    <text evidence="2 3 4">Binds the cytokinin trans-zeatin in vitro (PubMed:16998071, PubMed:18453695). Binds gibberellin A3 (GA3) in vitro (PubMed:25004979).</text>
</comment>
<comment type="subunit">
    <text evidence="1 2">Monomer.</text>
</comment>
<comment type="allergen">
    <text evidence="8">May cause an allergic reaction in human.</text>
</comment>
<comment type="similarity">
    <text evidence="7">Belongs to the BetVI family.</text>
</comment>
<dbReference type="EMBL" id="AB012218">
    <property type="protein sequence ID" value="BAA74451.1"/>
    <property type="molecule type" value="mRNA"/>
</dbReference>
<dbReference type="RefSeq" id="XP_014493319.1">
    <property type="nucleotide sequence ID" value="XM_014637833.1"/>
</dbReference>
<dbReference type="PDB" id="2FLH">
    <property type="method" value="X-ray"/>
    <property type="resolution" value="1.20 A"/>
    <property type="chains" value="A/B/C/D=1-155"/>
</dbReference>
<dbReference type="PDB" id="3C0V">
    <property type="method" value="X-ray"/>
    <property type="resolution" value="1.80 A"/>
    <property type="chains" value="A/B/C/D=1-155"/>
</dbReference>
<dbReference type="PDB" id="4PSB">
    <property type="method" value="X-ray"/>
    <property type="resolution" value="1.42 A"/>
    <property type="chains" value="A=1-155"/>
</dbReference>
<dbReference type="PDBsum" id="2FLH"/>
<dbReference type="PDBsum" id="3C0V"/>
<dbReference type="PDBsum" id="4PSB"/>
<dbReference type="SMR" id="A0A1S3THR8"/>
<dbReference type="STRING" id="3916.A0A1S3THR8"/>
<dbReference type="Allergome" id="10102">
    <property type="allergen name" value="Vig r 6.0101"/>
</dbReference>
<dbReference type="Allergome" id="9728">
    <property type="allergen name" value="Vig r 6"/>
</dbReference>
<dbReference type="EnsemblPlants" id="Vradi02g11210.1">
    <property type="protein sequence ID" value="Vradi02g11210.1"/>
    <property type="gene ID" value="Vradi02g11210"/>
</dbReference>
<dbReference type="GeneID" id="106755646"/>
<dbReference type="Gramene" id="Vradi02g11210.1">
    <property type="protein sequence ID" value="Vradi02g11210.1"/>
    <property type="gene ID" value="Vradi02g11210"/>
</dbReference>
<dbReference type="KEGG" id="vra:106755646"/>
<dbReference type="OrthoDB" id="1845342at2759"/>
<dbReference type="EvolutionaryTrace" id="A0A1S3THR8"/>
<dbReference type="Proteomes" id="UP000087766">
    <property type="component" value="Chromosome 2"/>
</dbReference>
<dbReference type="GO" id="GO:0005737">
    <property type="term" value="C:cytoplasm"/>
    <property type="evidence" value="ECO:0007669"/>
    <property type="project" value="TreeGrafter"/>
</dbReference>
<dbReference type="GO" id="GO:0005634">
    <property type="term" value="C:nucleus"/>
    <property type="evidence" value="ECO:0007669"/>
    <property type="project" value="TreeGrafter"/>
</dbReference>
<dbReference type="GO" id="GO:0010427">
    <property type="term" value="F:abscisic acid binding"/>
    <property type="evidence" value="ECO:0007669"/>
    <property type="project" value="InterPro"/>
</dbReference>
<dbReference type="GO" id="GO:0044373">
    <property type="term" value="F:cytokinin binding"/>
    <property type="evidence" value="ECO:0000314"/>
    <property type="project" value="UniProtKB"/>
</dbReference>
<dbReference type="GO" id="GO:0010331">
    <property type="term" value="F:gibberellin binding"/>
    <property type="evidence" value="ECO:0000314"/>
    <property type="project" value="UniProtKB"/>
</dbReference>
<dbReference type="GO" id="GO:0004864">
    <property type="term" value="F:protein phosphatase inhibitor activity"/>
    <property type="evidence" value="ECO:0007669"/>
    <property type="project" value="InterPro"/>
</dbReference>
<dbReference type="GO" id="GO:0038023">
    <property type="term" value="F:signaling receptor activity"/>
    <property type="evidence" value="ECO:0007669"/>
    <property type="project" value="InterPro"/>
</dbReference>
<dbReference type="GO" id="GO:0009738">
    <property type="term" value="P:abscisic acid-activated signaling pathway"/>
    <property type="evidence" value="ECO:0007669"/>
    <property type="project" value="InterPro"/>
</dbReference>
<dbReference type="GO" id="GO:0006952">
    <property type="term" value="P:defense response"/>
    <property type="evidence" value="ECO:0007669"/>
    <property type="project" value="InterPro"/>
</dbReference>
<dbReference type="CDD" id="cd07816">
    <property type="entry name" value="Bet_v1-like"/>
    <property type="match status" value="1"/>
</dbReference>
<dbReference type="FunFam" id="3.30.530.20:FF:000087">
    <property type="entry name" value="Phytohormone-binding protein CSBP"/>
    <property type="match status" value="1"/>
</dbReference>
<dbReference type="Gene3D" id="3.30.530.20">
    <property type="match status" value="1"/>
</dbReference>
<dbReference type="InterPro" id="IPR000916">
    <property type="entry name" value="Bet_v_I/MLP"/>
</dbReference>
<dbReference type="InterPro" id="IPR024949">
    <property type="entry name" value="Bet_v_I_allergen"/>
</dbReference>
<dbReference type="InterPro" id="IPR050279">
    <property type="entry name" value="Plant_def-hormone_signal"/>
</dbReference>
<dbReference type="InterPro" id="IPR023393">
    <property type="entry name" value="START-like_dom_sf"/>
</dbReference>
<dbReference type="PANTHER" id="PTHR31213">
    <property type="entry name" value="OS08G0374000 PROTEIN-RELATED"/>
    <property type="match status" value="1"/>
</dbReference>
<dbReference type="PANTHER" id="PTHR31213:SF64">
    <property type="entry name" value="PHYTOHORMONE-BINDING PROTEIN"/>
    <property type="match status" value="1"/>
</dbReference>
<dbReference type="Pfam" id="PF00407">
    <property type="entry name" value="Bet_v_1"/>
    <property type="match status" value="1"/>
</dbReference>
<dbReference type="PRINTS" id="PR00634">
    <property type="entry name" value="BETALLERGEN"/>
</dbReference>
<dbReference type="SUPFAM" id="SSF55961">
    <property type="entry name" value="Bet v1-like"/>
    <property type="match status" value="1"/>
</dbReference>
<sequence>MVKEFNTQTELSVRLEALWAVLSKDFITVVPKVLPHIVKDVQLIEGDGGVGTILIFNFLPEVSPSYQREEITEFDESSHEIGLQVIEGGYLSQGLSYYKTTFKLSEIEEDKTLVNVKISYDHDSDIEEKVTPTKTSQSTLMYLRRLERYLSNGSA</sequence>
<proteinExistence type="evidence at protein level"/>
<gene>
    <name evidence="6" type="primary">CSBP</name>
    <name type="ORF">LOC106755646</name>
</gene>
<reference key="1">
    <citation type="journal article" date="1998" name="Eur. J. Biochem.">
        <title>Purification and cDNA cloning of cytokinin-specific binding protein from mung bean (Vigna radiata).</title>
        <authorList>
            <person name="Fujimoto Y."/>
            <person name="Nagata R."/>
            <person name="Fukasawa H."/>
            <person name="Yano K."/>
            <person name="Azuma M."/>
            <person name="Iida A."/>
            <person name="Sugimoto S."/>
            <person name="Shudo K."/>
            <person name="Hashimoto Y."/>
        </authorList>
    </citation>
    <scope>NUCLEOTIDE SEQUENCE [MRNA]</scope>
    <scope>PROTEIN SEQUENCE OF 33-39; 40-50 AND 118-129</scope>
</reference>
<reference key="2">
    <citation type="journal article" date="2014" name="Nat. Commun.">
        <title>Genome sequence of mungbean and insights into evolution within Vigna species.</title>
        <authorList>
            <person name="Kang Y.J."/>
            <person name="Kim S.K."/>
            <person name="Kim M.Y."/>
            <person name="Lestari P."/>
            <person name="Kim K.H."/>
            <person name="Ha B.K."/>
            <person name="Jun T.H."/>
            <person name="Hwang W.J."/>
            <person name="Lee T."/>
            <person name="Lee J."/>
            <person name="Shim S."/>
            <person name="Yoon M.Y."/>
            <person name="Jang Y.E."/>
            <person name="Han K.S."/>
            <person name="Taeprayoon P."/>
            <person name="Yoon N."/>
            <person name="Somta P."/>
            <person name="Tanya P."/>
            <person name="Kim K.S."/>
            <person name="Gwag J.G."/>
            <person name="Moon J.K."/>
            <person name="Lee Y.H."/>
            <person name="Park B.S."/>
            <person name="Bombarely A."/>
            <person name="Doyle J.J."/>
            <person name="Jackson S.A."/>
            <person name="Schafleitner R."/>
            <person name="Srinives P."/>
            <person name="Varshney R.K."/>
            <person name="Lee S.H."/>
        </authorList>
    </citation>
    <scope>NUCLEOTIDE SEQUENCE [LARGE SCALE GENOMIC DNA]</scope>
    <source>
        <strain>cv. VC1973A</strain>
    </source>
</reference>
<reference key="3">
    <citation type="journal article" date="2003" name="Acta Crystallogr. D">
        <title>Crystallization and preliminary crystallographic studies of mung bean cytokinin-specific binding protein.</title>
        <authorList>
            <person name="Bujacz G.D."/>
            <person name="Pasternak O."/>
            <person name="Fujimoto Y."/>
            <person name="Hashimoto Y."/>
            <person name="Sikorski M.M."/>
            <person name="Jaskolski M."/>
        </authorList>
    </citation>
    <scope>SUBUNIT</scope>
    <scope>PRELIMINARY CRYSTALLIZATION</scope>
</reference>
<reference key="4">
    <citation type="journal article" date="2011" name="J. Allergy Clin. Immunol.">
        <title>Prediction of IgE-binding epitopes by means of allergen surface comparison and correlation to cross-reactivity.</title>
        <authorList>
            <person name="Dall'Antonia F."/>
            <person name="Gieras A."/>
            <person name="Devanaboyina S.C."/>
            <person name="Valenta R."/>
            <person name="Keller W."/>
        </authorList>
    </citation>
    <scope>ALLERGEN</scope>
</reference>
<reference key="5">
    <citation type="journal article" date="2006" name="Plant Cell">
        <title>Crystal structure of Vigna radiata cytokinin-specific binding protein in complex with zeatin.</title>
        <authorList>
            <person name="Pasternak O."/>
            <person name="Bujacz G.D."/>
            <person name="Fujimoto Y."/>
            <person name="Hashimoto Y."/>
            <person name="Jelen F."/>
            <person name="Otlewski J."/>
            <person name="Sikorski M.M."/>
            <person name="Jaskolski M."/>
        </authorList>
    </citation>
    <scope>X-RAY CRYSTALLOGRAPHY (1.20 ANGSTROMS) IN COMPLEX WITH TRANS-ZEATIN</scope>
    <scope>SUBUNIT</scope>
    <scope>FUNCTION</scope>
</reference>
<reference key="6">
    <citation type="journal article" date="2008" name="Acta Crystallogr. D">
        <title>MAD phasing using the (Ta6Br12)2+ cluster: a retrospective study.</title>
        <authorList>
            <person name="Pasternak O."/>
            <person name="Bujacz A."/>
            <person name="Biesiadka J."/>
            <person name="Bujacz G."/>
            <person name="Sikorski M."/>
            <person name="Jaskolski M."/>
        </authorList>
    </citation>
    <scope>X-RAY CRYSTALLOGRAPHY (1.80 ANGSTROMS) IN COMPLEX WITH TRANS-ZEATIN</scope>
    <scope>FUNCTION</scope>
</reference>
<reference key="7">
    <citation type="journal article" date="2014" name="Acta Crystallogr. D">
        <title>Specific binding of gibberellic acid by cytokinin-specific binding proteins: a new aspect of plant hormone-binding proteins with the PR-10 fold.</title>
        <authorList>
            <person name="Ruszkowski M."/>
            <person name="Sliwiak J."/>
            <person name="Ciesielska A."/>
            <person name="Barciszewski J."/>
            <person name="Sikorski M."/>
            <person name="Jaskolski M."/>
        </authorList>
    </citation>
    <scope>X-RAY CRYSTALLOGRAPHY (1.42 ANGSTROMS) IN COMPLEX WITH GIBBERELLIN A3</scope>
    <scope>FUNCTION</scope>
</reference>
<protein>
    <recommendedName>
        <fullName evidence="7">Phytohormone-binding protein CSBP</fullName>
    </recommendedName>
    <alternativeName>
        <fullName evidence="6">Cytokinin-specific binding protein</fullName>
        <shortName evidence="5">VrCSBP</shortName>
    </alternativeName>
    <alternativeName>
        <fullName evidence="7">Major pollen allergen Bet v 1-like protein</fullName>
    </alternativeName>
    <alternativeName>
        <fullName evidence="7">Pathogenesis-related PR10-like protein</fullName>
    </alternativeName>
    <allergenName evidence="7">Vig r 6</allergenName>
</protein>
<organism>
    <name type="scientific">Vigna radiata var. radiata</name>
    <name type="common">Mung bean</name>
    <name type="synonym">Phaseolus aureus</name>
    <dbReference type="NCBI Taxonomy" id="3916"/>
    <lineage>
        <taxon>Eukaryota</taxon>
        <taxon>Viridiplantae</taxon>
        <taxon>Streptophyta</taxon>
        <taxon>Embryophyta</taxon>
        <taxon>Tracheophyta</taxon>
        <taxon>Spermatophyta</taxon>
        <taxon>Magnoliopsida</taxon>
        <taxon>eudicotyledons</taxon>
        <taxon>Gunneridae</taxon>
        <taxon>Pentapetalae</taxon>
        <taxon>rosids</taxon>
        <taxon>fabids</taxon>
        <taxon>Fabales</taxon>
        <taxon>Fabaceae</taxon>
        <taxon>Papilionoideae</taxon>
        <taxon>50 kb inversion clade</taxon>
        <taxon>NPAAA clade</taxon>
        <taxon>indigoferoid/millettioid clade</taxon>
        <taxon>Phaseoleae</taxon>
        <taxon>Vigna</taxon>
    </lineage>
</organism>